<protein>
    <recommendedName>
        <fullName>Leaf-specific thionin DB4</fullName>
    </recommendedName>
</protein>
<organism>
    <name type="scientific">Hordeum vulgare</name>
    <name type="common">Barley</name>
    <dbReference type="NCBI Taxonomy" id="4513"/>
    <lineage>
        <taxon>Eukaryota</taxon>
        <taxon>Viridiplantae</taxon>
        <taxon>Streptophyta</taxon>
        <taxon>Embryophyta</taxon>
        <taxon>Tracheophyta</taxon>
        <taxon>Spermatophyta</taxon>
        <taxon>Magnoliopsida</taxon>
        <taxon>Liliopsida</taxon>
        <taxon>Poales</taxon>
        <taxon>Poaceae</taxon>
        <taxon>BOP clade</taxon>
        <taxon>Pooideae</taxon>
        <taxon>Triticodae</taxon>
        <taxon>Triticeae</taxon>
        <taxon>Hordeinae</taxon>
        <taxon>Hordeum</taxon>
    </lineage>
</organism>
<reference key="1">
    <citation type="journal article" date="1987" name="Mol. Gen. Genet.">
        <title>Isolation and characterization of cDNAs coding for leaf-specific thionins closely related to the endosperm-specific hordothionin of barley (Hordeum vulgare L.).</title>
        <authorList>
            <person name="Bohlmann H."/>
            <person name="Apel K."/>
        </authorList>
    </citation>
    <scope>NUCLEOTIDE SEQUENCE [MRNA]</scope>
    <source>
        <strain>cv. Carina</strain>
    </source>
</reference>
<keyword id="KW-1015">Disulfide bond</keyword>
<keyword id="KW-0611">Plant defense</keyword>
<keyword id="KW-0964">Secreted</keyword>
<keyword id="KW-0732">Signal</keyword>
<keyword id="KW-0800">Toxin</keyword>
<name>THN3_HORVU</name>
<dbReference type="EMBL" id="X05576">
    <property type="protein sequence ID" value="CAA29082.1"/>
    <property type="molecule type" value="mRNA"/>
</dbReference>
<dbReference type="PIR" id="S07648">
    <property type="entry name" value="S07648"/>
</dbReference>
<dbReference type="SMR" id="P08772"/>
<dbReference type="ExpressionAtlas" id="P08772">
    <property type="expression patterns" value="baseline and differential"/>
</dbReference>
<dbReference type="GO" id="GO:0005576">
    <property type="term" value="C:extracellular region"/>
    <property type="evidence" value="ECO:0007669"/>
    <property type="project" value="UniProtKB-SubCell"/>
</dbReference>
<dbReference type="GO" id="GO:0090729">
    <property type="term" value="F:toxin activity"/>
    <property type="evidence" value="ECO:0007669"/>
    <property type="project" value="UniProtKB-KW"/>
</dbReference>
<dbReference type="GO" id="GO:0006952">
    <property type="term" value="P:defense response"/>
    <property type="evidence" value="ECO:0007669"/>
    <property type="project" value="UniProtKB-KW"/>
</dbReference>
<dbReference type="FunFam" id="3.30.1350.10:FF:000001">
    <property type="entry name" value="Hellethionin-D"/>
    <property type="match status" value="1"/>
</dbReference>
<dbReference type="Gene3D" id="3.30.1350.10">
    <property type="entry name" value="Thionin-like"/>
    <property type="match status" value="1"/>
</dbReference>
<dbReference type="InterPro" id="IPR001010">
    <property type="entry name" value="Thionin"/>
</dbReference>
<dbReference type="InterPro" id="IPR036391">
    <property type="entry name" value="Thionin-like_sf"/>
</dbReference>
<dbReference type="PANTHER" id="PTHR33920">
    <property type="entry name" value="THIONIN-2.1-RELATED"/>
    <property type="match status" value="1"/>
</dbReference>
<dbReference type="PANTHER" id="PTHR33920:SF2">
    <property type="entry name" value="THIONIN-2.1-RELATED"/>
    <property type="match status" value="1"/>
</dbReference>
<dbReference type="Pfam" id="PF00321">
    <property type="entry name" value="Thionin"/>
    <property type="match status" value="1"/>
</dbReference>
<dbReference type="PRINTS" id="PR00287">
    <property type="entry name" value="THIONIN"/>
</dbReference>
<dbReference type="SUPFAM" id="SSF57429">
    <property type="entry name" value="Crambin-like"/>
    <property type="match status" value="1"/>
</dbReference>
<dbReference type="PROSITE" id="PS00271">
    <property type="entry name" value="THIONIN"/>
    <property type="match status" value="1"/>
</dbReference>
<sequence>MAPSKSIKSVVICVLILGLVLEQVQVEGKSCCKDTLARNCYNTCHFAGGSRPVCAGACRCKIISGPKCPSDYPKLNLLPESGEPDVTQYCTIGCRNSVCDNMDNVFRGQEMKFDMGLCSNACARFCNDGAVIQSVEA</sequence>
<evidence type="ECO:0000250" key="1">
    <source>
        <dbReference type="UniProtKB" id="P60057"/>
    </source>
</evidence>
<evidence type="ECO:0000255" key="2"/>
<evidence type="ECO:0000305" key="3"/>
<accession>P08772</accession>
<feature type="signal peptide" evidence="2">
    <location>
        <begin position="1"/>
        <end position="28"/>
    </location>
</feature>
<feature type="chain" id="PRO_0000034116" description="Leaf-specific thionin DB4">
    <location>
        <begin position="29"/>
        <end position="74"/>
    </location>
</feature>
<feature type="propeptide" id="PRO_0000459411" description="Acidic domain" evidence="3">
    <location>
        <begin position="75"/>
        <end position="137"/>
    </location>
</feature>
<feature type="disulfide bond" evidence="1">
    <location>
        <begin position="31"/>
        <end position="68"/>
    </location>
</feature>
<feature type="disulfide bond" evidence="1">
    <location>
        <begin position="32"/>
        <end position="60"/>
    </location>
</feature>
<feature type="disulfide bond" evidence="1">
    <location>
        <begin position="40"/>
        <end position="58"/>
    </location>
</feature>
<feature type="disulfide bond" evidence="1">
    <location>
        <begin position="44"/>
        <end position="54"/>
    </location>
</feature>
<proteinExistence type="evidence at transcript level"/>
<gene>
    <name type="primary">THI1.3</name>
</gene>
<comment type="function">
    <text>Thionins are small plant proteins which are toxic to animal cells. They seem to exert their toxic effect at the level of the cell membrane. Their precise function is not known.</text>
</comment>
<comment type="subcellular location">
    <subcellularLocation>
        <location evidence="3">Secreted</location>
    </subcellularLocation>
</comment>
<comment type="similarity">
    <text evidence="3">Belongs to the plant thionin (TC 1.C.44) family. 4 C-C subfamily.</text>
</comment>